<name>GATC_CHLTE</name>
<organism>
    <name type="scientific">Chlorobaculum tepidum (strain ATCC 49652 / DSM 12025 / NBRC 103806 / TLS)</name>
    <name type="common">Chlorobium tepidum</name>
    <dbReference type="NCBI Taxonomy" id="194439"/>
    <lineage>
        <taxon>Bacteria</taxon>
        <taxon>Pseudomonadati</taxon>
        <taxon>Chlorobiota</taxon>
        <taxon>Chlorobiia</taxon>
        <taxon>Chlorobiales</taxon>
        <taxon>Chlorobiaceae</taxon>
        <taxon>Chlorobaculum</taxon>
    </lineage>
</organism>
<feature type="chain" id="PRO_0000105290" description="Aspartyl/glutamyl-tRNA(Asn/Gln) amidotransferase subunit C">
    <location>
        <begin position="1"/>
        <end position="95"/>
    </location>
</feature>
<keyword id="KW-0067">ATP-binding</keyword>
<keyword id="KW-0436">Ligase</keyword>
<keyword id="KW-0547">Nucleotide-binding</keyword>
<keyword id="KW-0648">Protein biosynthesis</keyword>
<keyword id="KW-1185">Reference proteome</keyword>
<protein>
    <recommendedName>
        <fullName evidence="1">Aspartyl/glutamyl-tRNA(Asn/Gln) amidotransferase subunit C</fullName>
        <shortName evidence="1">Asp/Glu-ADT subunit C</shortName>
        <ecNumber evidence="1">6.3.5.-</ecNumber>
    </recommendedName>
</protein>
<reference key="1">
    <citation type="journal article" date="2002" name="Proc. Natl. Acad. Sci. U.S.A.">
        <title>The complete genome sequence of Chlorobium tepidum TLS, a photosynthetic, anaerobic, green-sulfur bacterium.</title>
        <authorList>
            <person name="Eisen J.A."/>
            <person name="Nelson K.E."/>
            <person name="Paulsen I.T."/>
            <person name="Heidelberg J.F."/>
            <person name="Wu M."/>
            <person name="Dodson R.J."/>
            <person name="DeBoy R.T."/>
            <person name="Gwinn M.L."/>
            <person name="Nelson W.C."/>
            <person name="Haft D.H."/>
            <person name="Hickey E.K."/>
            <person name="Peterson J.D."/>
            <person name="Durkin A.S."/>
            <person name="Kolonay J.F."/>
            <person name="Yang F."/>
            <person name="Holt I.E."/>
            <person name="Umayam L.A."/>
            <person name="Mason T.M."/>
            <person name="Brenner M."/>
            <person name="Shea T.P."/>
            <person name="Parksey D.S."/>
            <person name="Nierman W.C."/>
            <person name="Feldblyum T.V."/>
            <person name="Hansen C.L."/>
            <person name="Craven M.B."/>
            <person name="Radune D."/>
            <person name="Vamathevan J.J."/>
            <person name="Khouri H.M."/>
            <person name="White O."/>
            <person name="Gruber T.M."/>
            <person name="Ketchum K.A."/>
            <person name="Venter J.C."/>
            <person name="Tettelin H."/>
            <person name="Bryant D.A."/>
            <person name="Fraser C.M."/>
        </authorList>
    </citation>
    <scope>NUCLEOTIDE SEQUENCE [LARGE SCALE GENOMIC DNA]</scope>
    <source>
        <strain>ATCC 49652 / DSM 12025 / NBRC 103806 / TLS</strain>
    </source>
</reference>
<comment type="function">
    <text evidence="1">Allows the formation of correctly charged Asn-tRNA(Asn) or Gln-tRNA(Gln) through the transamidation of misacylated Asp-tRNA(Asn) or Glu-tRNA(Gln) in organisms which lack either or both of asparaginyl-tRNA or glutaminyl-tRNA synthetases. The reaction takes place in the presence of glutamine and ATP through an activated phospho-Asp-tRNA(Asn) or phospho-Glu-tRNA(Gln).</text>
</comment>
<comment type="catalytic activity">
    <reaction evidence="1">
        <text>L-glutamyl-tRNA(Gln) + L-glutamine + ATP + H2O = L-glutaminyl-tRNA(Gln) + L-glutamate + ADP + phosphate + H(+)</text>
        <dbReference type="Rhea" id="RHEA:17521"/>
        <dbReference type="Rhea" id="RHEA-COMP:9681"/>
        <dbReference type="Rhea" id="RHEA-COMP:9684"/>
        <dbReference type="ChEBI" id="CHEBI:15377"/>
        <dbReference type="ChEBI" id="CHEBI:15378"/>
        <dbReference type="ChEBI" id="CHEBI:29985"/>
        <dbReference type="ChEBI" id="CHEBI:30616"/>
        <dbReference type="ChEBI" id="CHEBI:43474"/>
        <dbReference type="ChEBI" id="CHEBI:58359"/>
        <dbReference type="ChEBI" id="CHEBI:78520"/>
        <dbReference type="ChEBI" id="CHEBI:78521"/>
        <dbReference type="ChEBI" id="CHEBI:456216"/>
    </reaction>
</comment>
<comment type="catalytic activity">
    <reaction evidence="1">
        <text>L-aspartyl-tRNA(Asn) + L-glutamine + ATP + H2O = L-asparaginyl-tRNA(Asn) + L-glutamate + ADP + phosphate + 2 H(+)</text>
        <dbReference type="Rhea" id="RHEA:14513"/>
        <dbReference type="Rhea" id="RHEA-COMP:9674"/>
        <dbReference type="Rhea" id="RHEA-COMP:9677"/>
        <dbReference type="ChEBI" id="CHEBI:15377"/>
        <dbReference type="ChEBI" id="CHEBI:15378"/>
        <dbReference type="ChEBI" id="CHEBI:29985"/>
        <dbReference type="ChEBI" id="CHEBI:30616"/>
        <dbReference type="ChEBI" id="CHEBI:43474"/>
        <dbReference type="ChEBI" id="CHEBI:58359"/>
        <dbReference type="ChEBI" id="CHEBI:78515"/>
        <dbReference type="ChEBI" id="CHEBI:78516"/>
        <dbReference type="ChEBI" id="CHEBI:456216"/>
    </reaction>
</comment>
<comment type="subunit">
    <text evidence="1">Heterotrimer of A, B and C subunits.</text>
</comment>
<comment type="similarity">
    <text evidence="1">Belongs to the GatC family.</text>
</comment>
<sequence>MSVTTKDVAYIAELARLKFTDAEQEKMASELNMILHYIEKLNGIDTEGVEPLSTIHDQINVLRADVEHTPLSNDEALKNAPDSQDRFFKVPKVIG</sequence>
<dbReference type="EC" id="6.3.5.-" evidence="1"/>
<dbReference type="EMBL" id="AE006470">
    <property type="protein sequence ID" value="AAM73054.1"/>
    <property type="molecule type" value="Genomic_DNA"/>
</dbReference>
<dbReference type="RefSeq" id="NP_662712.1">
    <property type="nucleotide sequence ID" value="NC_002932.3"/>
</dbReference>
<dbReference type="RefSeq" id="WP_010933493.1">
    <property type="nucleotide sequence ID" value="NC_002932.3"/>
</dbReference>
<dbReference type="SMR" id="Q8KBF4"/>
<dbReference type="STRING" id="194439.CT1833"/>
<dbReference type="DNASU" id="1008072"/>
<dbReference type="EnsemblBacteria" id="AAM73054">
    <property type="protein sequence ID" value="AAM73054"/>
    <property type="gene ID" value="CT1833"/>
</dbReference>
<dbReference type="KEGG" id="cte:CT1833"/>
<dbReference type="PATRIC" id="fig|194439.7.peg.1665"/>
<dbReference type="eggNOG" id="COG0721">
    <property type="taxonomic scope" value="Bacteria"/>
</dbReference>
<dbReference type="HOGENOM" id="CLU_105899_1_2_10"/>
<dbReference type="OrthoDB" id="9813938at2"/>
<dbReference type="Proteomes" id="UP000001007">
    <property type="component" value="Chromosome"/>
</dbReference>
<dbReference type="GO" id="GO:0050566">
    <property type="term" value="F:asparaginyl-tRNA synthase (glutamine-hydrolyzing) activity"/>
    <property type="evidence" value="ECO:0007669"/>
    <property type="project" value="RHEA"/>
</dbReference>
<dbReference type="GO" id="GO:0005524">
    <property type="term" value="F:ATP binding"/>
    <property type="evidence" value="ECO:0007669"/>
    <property type="project" value="UniProtKB-KW"/>
</dbReference>
<dbReference type="GO" id="GO:0050567">
    <property type="term" value="F:glutaminyl-tRNA synthase (glutamine-hydrolyzing) activity"/>
    <property type="evidence" value="ECO:0007669"/>
    <property type="project" value="UniProtKB-UniRule"/>
</dbReference>
<dbReference type="GO" id="GO:0070681">
    <property type="term" value="P:glutaminyl-tRNAGln biosynthesis via transamidation"/>
    <property type="evidence" value="ECO:0007669"/>
    <property type="project" value="TreeGrafter"/>
</dbReference>
<dbReference type="GO" id="GO:0006450">
    <property type="term" value="P:regulation of translational fidelity"/>
    <property type="evidence" value="ECO:0007669"/>
    <property type="project" value="InterPro"/>
</dbReference>
<dbReference type="GO" id="GO:0006412">
    <property type="term" value="P:translation"/>
    <property type="evidence" value="ECO:0007669"/>
    <property type="project" value="UniProtKB-UniRule"/>
</dbReference>
<dbReference type="Gene3D" id="1.10.20.60">
    <property type="entry name" value="Glu-tRNAGln amidotransferase C subunit, N-terminal domain"/>
    <property type="match status" value="1"/>
</dbReference>
<dbReference type="HAMAP" id="MF_00122">
    <property type="entry name" value="GatC"/>
    <property type="match status" value="1"/>
</dbReference>
<dbReference type="InterPro" id="IPR036113">
    <property type="entry name" value="Asp/Glu-ADT_sf_sub_c"/>
</dbReference>
<dbReference type="InterPro" id="IPR003837">
    <property type="entry name" value="GatC"/>
</dbReference>
<dbReference type="NCBIfam" id="TIGR00135">
    <property type="entry name" value="gatC"/>
    <property type="match status" value="1"/>
</dbReference>
<dbReference type="PANTHER" id="PTHR15004">
    <property type="entry name" value="GLUTAMYL-TRNA(GLN) AMIDOTRANSFERASE SUBUNIT C, MITOCHONDRIAL"/>
    <property type="match status" value="1"/>
</dbReference>
<dbReference type="PANTHER" id="PTHR15004:SF0">
    <property type="entry name" value="GLUTAMYL-TRNA(GLN) AMIDOTRANSFERASE SUBUNIT C, MITOCHONDRIAL"/>
    <property type="match status" value="1"/>
</dbReference>
<dbReference type="Pfam" id="PF02686">
    <property type="entry name" value="GatC"/>
    <property type="match status" value="1"/>
</dbReference>
<dbReference type="SUPFAM" id="SSF141000">
    <property type="entry name" value="Glu-tRNAGln amidotransferase C subunit"/>
    <property type="match status" value="1"/>
</dbReference>
<evidence type="ECO:0000255" key="1">
    <source>
        <dbReference type="HAMAP-Rule" id="MF_00122"/>
    </source>
</evidence>
<proteinExistence type="inferred from homology"/>
<accession>Q8KBF4</accession>
<gene>
    <name evidence="1" type="primary">gatC</name>
    <name type="ordered locus">CT1833</name>
</gene>